<gene>
    <name type="ordered locus">Hhal_2210</name>
</gene>
<dbReference type="EMBL" id="CP000544">
    <property type="protein sequence ID" value="ABM62974.1"/>
    <property type="molecule type" value="Genomic_DNA"/>
</dbReference>
<dbReference type="RefSeq" id="WP_011814996.1">
    <property type="nucleotide sequence ID" value="NC_008789.1"/>
</dbReference>
<dbReference type="SMR" id="A1WZ62"/>
<dbReference type="STRING" id="349124.Hhal_2210"/>
<dbReference type="KEGG" id="hha:Hhal_2210"/>
<dbReference type="eggNOG" id="COG0217">
    <property type="taxonomic scope" value="Bacteria"/>
</dbReference>
<dbReference type="HOGENOM" id="CLU_062974_2_2_6"/>
<dbReference type="OrthoDB" id="9781053at2"/>
<dbReference type="Proteomes" id="UP000000647">
    <property type="component" value="Chromosome"/>
</dbReference>
<dbReference type="GO" id="GO:0005829">
    <property type="term" value="C:cytosol"/>
    <property type="evidence" value="ECO:0007669"/>
    <property type="project" value="TreeGrafter"/>
</dbReference>
<dbReference type="GO" id="GO:0003677">
    <property type="term" value="F:DNA binding"/>
    <property type="evidence" value="ECO:0007669"/>
    <property type="project" value="UniProtKB-UniRule"/>
</dbReference>
<dbReference type="GO" id="GO:0006355">
    <property type="term" value="P:regulation of DNA-templated transcription"/>
    <property type="evidence" value="ECO:0007669"/>
    <property type="project" value="UniProtKB-UniRule"/>
</dbReference>
<dbReference type="FunFam" id="1.10.10.200:FF:000002">
    <property type="entry name" value="Probable transcriptional regulatory protein CLM62_37755"/>
    <property type="match status" value="1"/>
</dbReference>
<dbReference type="FunFam" id="3.30.70.980:FF:000002">
    <property type="entry name" value="Probable transcriptional regulatory protein YebC"/>
    <property type="match status" value="1"/>
</dbReference>
<dbReference type="Gene3D" id="1.10.10.200">
    <property type="match status" value="1"/>
</dbReference>
<dbReference type="Gene3D" id="3.30.70.980">
    <property type="match status" value="2"/>
</dbReference>
<dbReference type="HAMAP" id="MF_00693">
    <property type="entry name" value="Transcrip_reg_TACO1"/>
    <property type="match status" value="1"/>
</dbReference>
<dbReference type="InterPro" id="IPR017856">
    <property type="entry name" value="Integrase-like_N"/>
</dbReference>
<dbReference type="InterPro" id="IPR048300">
    <property type="entry name" value="TACO1_YebC-like_2nd/3rd_dom"/>
</dbReference>
<dbReference type="InterPro" id="IPR049083">
    <property type="entry name" value="TACO1_YebC_N"/>
</dbReference>
<dbReference type="InterPro" id="IPR002876">
    <property type="entry name" value="Transcrip_reg_TACO1-like"/>
</dbReference>
<dbReference type="InterPro" id="IPR026564">
    <property type="entry name" value="Transcrip_reg_TACO1-like_dom3"/>
</dbReference>
<dbReference type="InterPro" id="IPR029072">
    <property type="entry name" value="YebC-like"/>
</dbReference>
<dbReference type="NCBIfam" id="NF001030">
    <property type="entry name" value="PRK00110.1"/>
    <property type="match status" value="1"/>
</dbReference>
<dbReference type="NCBIfam" id="NF009044">
    <property type="entry name" value="PRK12378.1"/>
    <property type="match status" value="1"/>
</dbReference>
<dbReference type="NCBIfam" id="TIGR01033">
    <property type="entry name" value="YebC/PmpR family DNA-binding transcriptional regulator"/>
    <property type="match status" value="1"/>
</dbReference>
<dbReference type="PANTHER" id="PTHR12532:SF6">
    <property type="entry name" value="TRANSCRIPTIONAL REGULATORY PROTEIN YEBC-RELATED"/>
    <property type="match status" value="1"/>
</dbReference>
<dbReference type="PANTHER" id="PTHR12532">
    <property type="entry name" value="TRANSLATIONAL ACTIVATOR OF CYTOCHROME C OXIDASE 1"/>
    <property type="match status" value="1"/>
</dbReference>
<dbReference type="Pfam" id="PF20772">
    <property type="entry name" value="TACO1_YebC_N"/>
    <property type="match status" value="1"/>
</dbReference>
<dbReference type="Pfam" id="PF01709">
    <property type="entry name" value="Transcrip_reg"/>
    <property type="match status" value="1"/>
</dbReference>
<dbReference type="SUPFAM" id="SSF75625">
    <property type="entry name" value="YebC-like"/>
    <property type="match status" value="1"/>
</dbReference>
<comment type="subcellular location">
    <subcellularLocation>
        <location evidence="1">Cytoplasm</location>
    </subcellularLocation>
</comment>
<comment type="similarity">
    <text evidence="1">Belongs to the TACO1 family.</text>
</comment>
<organism>
    <name type="scientific">Halorhodospira halophila (strain DSM 244 / SL1)</name>
    <name type="common">Ectothiorhodospira halophila (strain DSM 244 / SL1)</name>
    <dbReference type="NCBI Taxonomy" id="349124"/>
    <lineage>
        <taxon>Bacteria</taxon>
        <taxon>Pseudomonadati</taxon>
        <taxon>Pseudomonadota</taxon>
        <taxon>Gammaproteobacteria</taxon>
        <taxon>Chromatiales</taxon>
        <taxon>Ectothiorhodospiraceae</taxon>
        <taxon>Halorhodospira</taxon>
    </lineage>
</organism>
<accession>A1WZ62</accession>
<evidence type="ECO:0000255" key="1">
    <source>
        <dbReference type="HAMAP-Rule" id="MF_00693"/>
    </source>
</evidence>
<protein>
    <recommendedName>
        <fullName evidence="1">Probable transcriptional regulatory protein Hhal_2210</fullName>
    </recommendedName>
</protein>
<reference key="1">
    <citation type="submission" date="2006-12" db="EMBL/GenBank/DDBJ databases">
        <title>Complete sequence of Halorhodospira halophila SL1.</title>
        <authorList>
            <consortium name="US DOE Joint Genome Institute"/>
            <person name="Copeland A."/>
            <person name="Lucas S."/>
            <person name="Lapidus A."/>
            <person name="Barry K."/>
            <person name="Detter J.C."/>
            <person name="Glavina del Rio T."/>
            <person name="Hammon N."/>
            <person name="Israni S."/>
            <person name="Dalin E."/>
            <person name="Tice H."/>
            <person name="Pitluck S."/>
            <person name="Saunders E."/>
            <person name="Brettin T."/>
            <person name="Bruce D."/>
            <person name="Han C."/>
            <person name="Tapia R."/>
            <person name="Schmutz J."/>
            <person name="Larimer F."/>
            <person name="Land M."/>
            <person name="Hauser L."/>
            <person name="Kyrpides N."/>
            <person name="Mikhailova N."/>
            <person name="Hoff W."/>
            <person name="Richardson P."/>
        </authorList>
    </citation>
    <scope>NUCLEOTIDE SEQUENCE [LARGE SCALE GENOMIC DNA]</scope>
    <source>
        <strain>DSM 244 / SL1</strain>
    </source>
</reference>
<keyword id="KW-0963">Cytoplasm</keyword>
<keyword id="KW-0238">DNA-binding</keyword>
<keyword id="KW-1185">Reference proteome</keyword>
<keyword id="KW-0804">Transcription</keyword>
<keyword id="KW-0805">Transcription regulation</keyword>
<sequence>MAGHSKWANIKRHKWAQDAKRSKIFTKHIREITVAARLGGPDPEMNARLRLALDRAFAVNLPKDRADAAIKKGAGLEEAEAYEEIRYEGYGPGGSAIMVDCMTDNRNRTVSEVRHAFSKHGGKMGTDNSVAYLFQERGVLVFAPGTDSDQVLEVALEAGADDLVENDDGSLEVLTTPEAYRGVRDALTEAGLEPEQADVTQRPDLTVQIEGDNAVSTARLIERLEDLDDVQHVYTNADLPAEAYEEG</sequence>
<proteinExistence type="inferred from homology"/>
<feature type="chain" id="PRO_1000045318" description="Probable transcriptional regulatory protein Hhal_2210">
    <location>
        <begin position="1"/>
        <end position="247"/>
    </location>
</feature>
<name>Y2210_HALHL</name>